<proteinExistence type="evidence at protein level"/>
<keyword id="KW-0044">Antibiotic</keyword>
<keyword id="KW-0929">Antimicrobial</keyword>
<keyword id="KW-0903">Direct protein sequencing</keyword>
<keyword id="KW-0295">Fungicide</keyword>
<keyword id="KW-1213">G-protein coupled receptor impairing toxin</keyword>
<keyword id="KW-0391">Immunity</keyword>
<keyword id="KW-0399">Innate immunity</keyword>
<keyword id="KW-0467">Mast cell degranulation</keyword>
<keyword id="KW-0964">Secreted</keyword>
<keyword id="KW-0800">Toxin</keyword>
<sequence>LKLKDILGKIKVILSHLNK</sequence>
<protein>
    <recommendedName>
        <fullName evidence="5">Bombolitin-7</fullName>
    </recommendedName>
</protein>
<accession>P0CD68</accession>
<name>BOL7_BOMLA</name>
<dbReference type="GO" id="GO:0005576">
    <property type="term" value="C:extracellular region"/>
    <property type="evidence" value="ECO:0007669"/>
    <property type="project" value="UniProtKB-SubCell"/>
</dbReference>
<dbReference type="GO" id="GO:0090729">
    <property type="term" value="F:toxin activity"/>
    <property type="evidence" value="ECO:0007669"/>
    <property type="project" value="UniProtKB-KW"/>
</dbReference>
<dbReference type="GO" id="GO:0042742">
    <property type="term" value="P:defense response to bacterium"/>
    <property type="evidence" value="ECO:0007669"/>
    <property type="project" value="UniProtKB-KW"/>
</dbReference>
<dbReference type="GO" id="GO:0050832">
    <property type="term" value="P:defense response to fungus"/>
    <property type="evidence" value="ECO:0007669"/>
    <property type="project" value="UniProtKB-KW"/>
</dbReference>
<dbReference type="GO" id="GO:0045087">
    <property type="term" value="P:innate immune response"/>
    <property type="evidence" value="ECO:0007669"/>
    <property type="project" value="UniProtKB-KW"/>
</dbReference>
<dbReference type="GO" id="GO:0031640">
    <property type="term" value="P:killing of cells of another organism"/>
    <property type="evidence" value="ECO:0007669"/>
    <property type="project" value="UniProtKB-KW"/>
</dbReference>
<comment type="function">
    <text evidence="1 2 3">Mast cell degranulating peptide. May also display antibacterial and antifungal activities (By similarity). Its mast cell degranulation activity may be related to the activation of G-protein coupled receptors in mast cells as well as interaction with other proteins located in cell endosomal membranes in the mast cells (By similarity).</text>
</comment>
<comment type="subcellular location">
    <subcellularLocation>
        <location evidence="4">Secreted</location>
    </subcellularLocation>
</comment>
<comment type="tissue specificity">
    <text evidence="7">Expressed by the venom gland.</text>
</comment>
<comment type="mass spectrometry"/>
<comment type="similarity">
    <text evidence="6">Belongs to the MCD family. Bombolitin subfamily.</text>
</comment>
<organism>
    <name type="scientific">Bombus lapidarius</name>
    <name type="common">Red-tailed bumblebee</name>
    <name type="synonym">Apis lapidaria</name>
    <dbReference type="NCBI Taxonomy" id="30192"/>
    <lineage>
        <taxon>Eukaryota</taxon>
        <taxon>Metazoa</taxon>
        <taxon>Ecdysozoa</taxon>
        <taxon>Arthropoda</taxon>
        <taxon>Hexapoda</taxon>
        <taxon>Insecta</taxon>
        <taxon>Pterygota</taxon>
        <taxon>Neoptera</taxon>
        <taxon>Endopterygota</taxon>
        <taxon>Hymenoptera</taxon>
        <taxon>Apocrita</taxon>
        <taxon>Aculeata</taxon>
        <taxon>Apoidea</taxon>
        <taxon>Anthophila</taxon>
        <taxon>Apidae</taxon>
        <taxon>Bombus</taxon>
        <taxon>Melanobombus</taxon>
    </lineage>
</organism>
<feature type="peptide" id="PRO_0000391362" description="Bombolitin-7">
    <location>
        <begin position="1"/>
        <end position="19"/>
    </location>
</feature>
<reference key="1">
    <citation type="journal article" date="2006" name="Toxicon">
        <title>Mass spectrometry strategies for venom mapping and peptide sequencing from crude venoms: case applications with single arthropod specimen.</title>
        <authorList>
            <person name="Favreau P."/>
            <person name="Menin L."/>
            <person name="Michalet S."/>
            <person name="Perret F."/>
            <person name="Cheneval O."/>
            <person name="Stocklin M."/>
            <person name="Bulet P."/>
            <person name="Stocklin R."/>
        </authorList>
    </citation>
    <scope>PROTEIN SEQUENCE</scope>
    <scope>SUBCELLULAR LOCATION</scope>
    <scope>MASS SPECTROMETRY</scope>
    <source>
        <tissue>Venom</tissue>
    </source>
</reference>
<evidence type="ECO:0000250" key="1">
    <source>
        <dbReference type="UniProtKB" id="P01514"/>
    </source>
</evidence>
<evidence type="ECO:0000250" key="2">
    <source>
        <dbReference type="UniProtKB" id="P07496"/>
    </source>
</evidence>
<evidence type="ECO:0000250" key="3">
    <source>
        <dbReference type="UniProtKB" id="P84914"/>
    </source>
</evidence>
<evidence type="ECO:0000269" key="4">
    <source>
    </source>
</evidence>
<evidence type="ECO:0000303" key="5">
    <source>
    </source>
</evidence>
<evidence type="ECO:0000305" key="6"/>
<evidence type="ECO:0000305" key="7">
    <source>
    </source>
</evidence>